<evidence type="ECO:0000255" key="1">
    <source>
        <dbReference type="HAMAP-Rule" id="MF_00670"/>
    </source>
</evidence>
<reference key="1">
    <citation type="journal article" date="2009" name="PLoS Genet.">
        <title>Organised genome dynamics in the Escherichia coli species results in highly diverse adaptive paths.</title>
        <authorList>
            <person name="Touchon M."/>
            <person name="Hoede C."/>
            <person name="Tenaillon O."/>
            <person name="Barbe V."/>
            <person name="Baeriswyl S."/>
            <person name="Bidet P."/>
            <person name="Bingen E."/>
            <person name="Bonacorsi S."/>
            <person name="Bouchier C."/>
            <person name="Bouvet O."/>
            <person name="Calteau A."/>
            <person name="Chiapello H."/>
            <person name="Clermont O."/>
            <person name="Cruveiller S."/>
            <person name="Danchin A."/>
            <person name="Diard M."/>
            <person name="Dossat C."/>
            <person name="Karoui M.E."/>
            <person name="Frapy E."/>
            <person name="Garry L."/>
            <person name="Ghigo J.M."/>
            <person name="Gilles A.M."/>
            <person name="Johnson J."/>
            <person name="Le Bouguenec C."/>
            <person name="Lescat M."/>
            <person name="Mangenot S."/>
            <person name="Martinez-Jehanne V."/>
            <person name="Matic I."/>
            <person name="Nassif X."/>
            <person name="Oztas S."/>
            <person name="Petit M.A."/>
            <person name="Pichon C."/>
            <person name="Rouy Z."/>
            <person name="Ruf C.S."/>
            <person name="Schneider D."/>
            <person name="Tourret J."/>
            <person name="Vacherie B."/>
            <person name="Vallenet D."/>
            <person name="Medigue C."/>
            <person name="Rocha E.P.C."/>
            <person name="Denamur E."/>
        </authorList>
    </citation>
    <scope>NUCLEOTIDE SEQUENCE [LARGE SCALE GENOMIC DNA]</scope>
    <source>
        <strain>UMN026 / ExPEC</strain>
    </source>
</reference>
<protein>
    <recommendedName>
        <fullName evidence="1">Altronate oxidoreductase</fullName>
        <ecNumber evidence="1">1.1.1.58</ecNumber>
    </recommendedName>
    <alternativeName>
        <fullName evidence="1">Tagaturonate dehydrogenase</fullName>
    </alternativeName>
    <alternativeName>
        <fullName evidence="1">Tagaturonate reductase</fullName>
    </alternativeName>
</protein>
<name>UXAB_ECOLU</name>
<feature type="chain" id="PRO_1000131510" description="Altronate oxidoreductase">
    <location>
        <begin position="1"/>
        <end position="483"/>
    </location>
</feature>
<feature type="binding site" evidence="1">
    <location>
        <begin position="18"/>
        <end position="29"/>
    </location>
    <ligand>
        <name>NAD(+)</name>
        <dbReference type="ChEBI" id="CHEBI:57540"/>
    </ligand>
</feature>
<dbReference type="EC" id="1.1.1.58" evidence="1"/>
<dbReference type="EMBL" id="CU928163">
    <property type="protein sequence ID" value="CAR12990.1"/>
    <property type="molecule type" value="Genomic_DNA"/>
</dbReference>
<dbReference type="RefSeq" id="WP_000854634.1">
    <property type="nucleotide sequence ID" value="NC_011751.1"/>
</dbReference>
<dbReference type="RefSeq" id="YP_002412524.1">
    <property type="nucleotide sequence ID" value="NC_011751.1"/>
</dbReference>
<dbReference type="SMR" id="B7N4U6"/>
<dbReference type="STRING" id="585056.ECUMN_1789"/>
<dbReference type="KEGG" id="eum:ECUMN_1789"/>
<dbReference type="PATRIC" id="fig|585056.7.peg.1975"/>
<dbReference type="HOGENOM" id="CLU_027324_1_0_6"/>
<dbReference type="UniPathway" id="UPA00246"/>
<dbReference type="Proteomes" id="UP000007097">
    <property type="component" value="Chromosome"/>
</dbReference>
<dbReference type="GO" id="GO:0005829">
    <property type="term" value="C:cytosol"/>
    <property type="evidence" value="ECO:0007669"/>
    <property type="project" value="TreeGrafter"/>
</dbReference>
<dbReference type="GO" id="GO:0008926">
    <property type="term" value="F:mannitol-1-phosphate 5-dehydrogenase activity"/>
    <property type="evidence" value="ECO:0007669"/>
    <property type="project" value="TreeGrafter"/>
</dbReference>
<dbReference type="GO" id="GO:0009026">
    <property type="term" value="F:tagaturonate reductase activity"/>
    <property type="evidence" value="ECO:0007669"/>
    <property type="project" value="UniProtKB-UniRule"/>
</dbReference>
<dbReference type="GO" id="GO:0019698">
    <property type="term" value="P:D-galacturonate catabolic process"/>
    <property type="evidence" value="ECO:0007669"/>
    <property type="project" value="TreeGrafter"/>
</dbReference>
<dbReference type="GO" id="GO:0019592">
    <property type="term" value="P:mannitol catabolic process"/>
    <property type="evidence" value="ECO:0007669"/>
    <property type="project" value="TreeGrafter"/>
</dbReference>
<dbReference type="FunFam" id="1.10.1040.10:FF:000018">
    <property type="entry name" value="Altronate oxidoreductase"/>
    <property type="match status" value="1"/>
</dbReference>
<dbReference type="FunFam" id="3.40.50.720:FF:000153">
    <property type="entry name" value="Altronate oxidoreductase"/>
    <property type="match status" value="1"/>
</dbReference>
<dbReference type="Gene3D" id="1.10.1040.10">
    <property type="entry name" value="N-(1-d-carboxylethyl)-l-norvaline Dehydrogenase, domain 2"/>
    <property type="match status" value="1"/>
</dbReference>
<dbReference type="Gene3D" id="3.40.50.720">
    <property type="entry name" value="NAD(P)-binding Rossmann-like Domain"/>
    <property type="match status" value="1"/>
</dbReference>
<dbReference type="HAMAP" id="MF_00670">
    <property type="entry name" value="Altron_oxidoreduct"/>
    <property type="match status" value="1"/>
</dbReference>
<dbReference type="InterPro" id="IPR008927">
    <property type="entry name" value="6-PGluconate_DH-like_C_sf"/>
</dbReference>
<dbReference type="InterPro" id="IPR013328">
    <property type="entry name" value="6PGD_dom2"/>
</dbReference>
<dbReference type="InterPro" id="IPR023668">
    <property type="entry name" value="Altronate_OxRdtase"/>
</dbReference>
<dbReference type="InterPro" id="IPR013118">
    <property type="entry name" value="Mannitol_DH_C"/>
</dbReference>
<dbReference type="InterPro" id="IPR013131">
    <property type="entry name" value="Mannitol_DH_N"/>
</dbReference>
<dbReference type="InterPro" id="IPR036291">
    <property type="entry name" value="NAD(P)-bd_dom_sf"/>
</dbReference>
<dbReference type="NCBIfam" id="NF002969">
    <property type="entry name" value="PRK03643.1"/>
    <property type="match status" value="1"/>
</dbReference>
<dbReference type="PANTHER" id="PTHR30524:SF0">
    <property type="entry name" value="ALTRONATE OXIDOREDUCTASE-RELATED"/>
    <property type="match status" value="1"/>
</dbReference>
<dbReference type="PANTHER" id="PTHR30524">
    <property type="entry name" value="MANNITOL-1-PHOSPHATE 5-DEHYDROGENASE"/>
    <property type="match status" value="1"/>
</dbReference>
<dbReference type="Pfam" id="PF01232">
    <property type="entry name" value="Mannitol_dh"/>
    <property type="match status" value="1"/>
</dbReference>
<dbReference type="Pfam" id="PF08125">
    <property type="entry name" value="Mannitol_dh_C"/>
    <property type="match status" value="1"/>
</dbReference>
<dbReference type="SUPFAM" id="SSF48179">
    <property type="entry name" value="6-phosphogluconate dehydrogenase C-terminal domain-like"/>
    <property type="match status" value="1"/>
</dbReference>
<dbReference type="SUPFAM" id="SSF51735">
    <property type="entry name" value="NAD(P)-binding Rossmann-fold domains"/>
    <property type="match status" value="1"/>
</dbReference>
<gene>
    <name evidence="1" type="primary">uxaB</name>
    <name type="ordered locus">ECUMN_1789</name>
</gene>
<proteinExistence type="inferred from homology"/>
<keyword id="KW-0520">NAD</keyword>
<keyword id="KW-0560">Oxidoreductase</keyword>
<comment type="catalytic activity">
    <reaction evidence="1">
        <text>D-altronate + NAD(+) = keto-D-tagaturonate + NADH + H(+)</text>
        <dbReference type="Rhea" id="RHEA:17813"/>
        <dbReference type="ChEBI" id="CHEBI:15378"/>
        <dbReference type="ChEBI" id="CHEBI:17360"/>
        <dbReference type="ChEBI" id="CHEBI:17886"/>
        <dbReference type="ChEBI" id="CHEBI:57540"/>
        <dbReference type="ChEBI" id="CHEBI:57945"/>
        <dbReference type="EC" id="1.1.1.58"/>
    </reaction>
</comment>
<comment type="pathway">
    <text evidence="1">Carbohydrate metabolism; pentose and glucuronate interconversion.</text>
</comment>
<comment type="similarity">
    <text evidence="1">Belongs to the mannitol dehydrogenase family. UxaB subfamily.</text>
</comment>
<sequence length="483" mass="54836">MKTLNRRDFPGAQYPERIIQFGEGNFLRAFVDWQIDLLNEHTDLNSGVVVVRPIETSFPPSLSTQDGLYTTIIRGLNEKGEAVSDARLIRSVNREISVYSEYDEFLKLAHNPEMRFVFSNTTEAGISYHAGDKFDDAPAVSYPAKLTRLLFERFSHFNGALDKGWIIIPCELIDYNGDALRELVLRYAQEWALPEAFIQWLDQANSFCSTLVDRIVTGYPRDEVAKLEEELGYHDGFLDTAEHFYLFVIQGPKSLATELRLDKYPLNVLIVDDIKPYKERKVAILNGAHTALVPVAFQAGLDTVGEAMNDAEICAFVEKAIYEEIIPVLDLPRDELESFASAVTGRFRNPYIKHQLLSIALNGMTKFRTRILPQLLAGQKANGTLPARLTFALAALIAFYRGERNGETYPVQDDAHWLERYQQLWSQHRDRVIGTQELVAIVLAEKDHWEQDLTQVPGLVEQVANDLDVILEKGMREAVRPLC</sequence>
<organism>
    <name type="scientific">Escherichia coli O17:K52:H18 (strain UMN026 / ExPEC)</name>
    <dbReference type="NCBI Taxonomy" id="585056"/>
    <lineage>
        <taxon>Bacteria</taxon>
        <taxon>Pseudomonadati</taxon>
        <taxon>Pseudomonadota</taxon>
        <taxon>Gammaproteobacteria</taxon>
        <taxon>Enterobacterales</taxon>
        <taxon>Enterobacteriaceae</taxon>
        <taxon>Escherichia</taxon>
    </lineage>
</organism>
<accession>B7N4U6</accession>